<organism>
    <name type="scientific">Pseudomonas aeruginosa (strain ATCC 15692 / DSM 22644 / CIP 104116 / JCM 14847 / LMG 12228 / 1C / PRS 101 / PAO1)</name>
    <dbReference type="NCBI Taxonomy" id="208964"/>
    <lineage>
        <taxon>Bacteria</taxon>
        <taxon>Pseudomonadati</taxon>
        <taxon>Pseudomonadota</taxon>
        <taxon>Gammaproteobacteria</taxon>
        <taxon>Pseudomonadales</taxon>
        <taxon>Pseudomonadaceae</taxon>
        <taxon>Pseudomonas</taxon>
    </lineage>
</organism>
<sequence length="337" mass="37037">MSFTPANRAYPYTRLRRNRRDDFSRRLVRENVLTVDDLILPVFVLDGVNQRESIPSMPGVERLSIDQLLIEAEEWVALGIPALALFPVTPVEKKSLDAAEAYNPEGIAQRATRALRERFPELGIITDVALDPFTTHGQDGILDDDGYVLNDVSIDVLVRQALSHAEAGAQVVAPSDMMDGRIGAIREALESAGHTNVRIMAYSAKYASAYYGPFRDAVGSASNLGKGNKATYQMDPANSDEALHEVAADLAEGADMVMVKPGMPYLDIVRRVKDEFRAPTFVYQVSGEYAMHMGAIQNGWLAESVILESLTAFKRAGADGILTYFAKQAAEQLRRGR</sequence>
<comment type="function">
    <text evidence="1">Catalyzes an early step in the biosynthesis of tetrapyrroles. Binds two molecules of 5-aminolevulinate per subunit, each at a distinct site, and catalyzes their condensation to form porphobilinogen (By similarity).</text>
</comment>
<comment type="catalytic activity">
    <reaction evidence="4">
        <text>2 5-aminolevulinate = porphobilinogen + 2 H2O + H(+)</text>
        <dbReference type="Rhea" id="RHEA:24064"/>
        <dbReference type="ChEBI" id="CHEBI:15377"/>
        <dbReference type="ChEBI" id="CHEBI:15378"/>
        <dbReference type="ChEBI" id="CHEBI:58126"/>
        <dbReference type="ChEBI" id="CHEBI:356416"/>
        <dbReference type="EC" id="4.2.1.24"/>
    </reaction>
</comment>
<comment type="cofactor">
    <cofactor evidence="3 4">
        <name>Mg(2+)</name>
        <dbReference type="ChEBI" id="CHEBI:18420"/>
    </cofactor>
</comment>
<comment type="activity regulation">
    <text>Stimulated by magnesium ions.</text>
</comment>
<comment type="pathway">
    <text>Porphyrin-containing compound metabolism; protoporphyrin-IX biosynthesis; coproporphyrinogen-III from 5-aminolevulinate: step 1/4.</text>
</comment>
<comment type="subunit">
    <text evidence="2 3 5">Homooctamer; formed by oligomerization of dimers.</text>
</comment>
<comment type="similarity">
    <text evidence="6">Belongs to the ALAD family.</text>
</comment>
<dbReference type="EC" id="4.2.1.24"/>
<dbReference type="EMBL" id="X91820">
    <property type="protein sequence ID" value="CAA62930.1"/>
    <property type="molecule type" value="Genomic_DNA"/>
</dbReference>
<dbReference type="EMBL" id="AE004091">
    <property type="protein sequence ID" value="AAG08628.1"/>
    <property type="molecule type" value="Genomic_DNA"/>
</dbReference>
<dbReference type="PIR" id="S60577">
    <property type="entry name" value="S60577"/>
</dbReference>
<dbReference type="RefSeq" id="NP_253930.1">
    <property type="nucleotide sequence ID" value="NC_002516.2"/>
</dbReference>
<dbReference type="RefSeq" id="WP_003096352.1">
    <property type="nucleotide sequence ID" value="NZ_QZGE01000002.1"/>
</dbReference>
<dbReference type="PDB" id="1B4K">
    <property type="method" value="X-ray"/>
    <property type="resolution" value="1.67 A"/>
    <property type="chains" value="A/B=1-337"/>
</dbReference>
<dbReference type="PDB" id="1GZG">
    <property type="method" value="X-ray"/>
    <property type="resolution" value="1.66 A"/>
    <property type="chains" value="A/B=1-337"/>
</dbReference>
<dbReference type="PDB" id="1W54">
    <property type="method" value="X-ray"/>
    <property type="resolution" value="2.20 A"/>
    <property type="chains" value="A/B=1-337"/>
</dbReference>
<dbReference type="PDB" id="1W56">
    <property type="method" value="X-ray"/>
    <property type="resolution" value="1.70 A"/>
    <property type="chains" value="A/B=1-337"/>
</dbReference>
<dbReference type="PDB" id="1W5M">
    <property type="method" value="X-ray"/>
    <property type="resolution" value="1.60 A"/>
    <property type="chains" value="A/B=1-337"/>
</dbReference>
<dbReference type="PDB" id="1W5N">
    <property type="method" value="X-ray"/>
    <property type="resolution" value="1.65 A"/>
    <property type="chains" value="A/B=1-337"/>
</dbReference>
<dbReference type="PDB" id="1W5O">
    <property type="method" value="X-ray"/>
    <property type="resolution" value="1.85 A"/>
    <property type="chains" value="A/B=1-337"/>
</dbReference>
<dbReference type="PDB" id="1W5P">
    <property type="method" value="X-ray"/>
    <property type="resolution" value="1.55 A"/>
    <property type="chains" value="A/B=1-337"/>
</dbReference>
<dbReference type="PDB" id="1W5Q">
    <property type="method" value="X-ray"/>
    <property type="resolution" value="1.40 A"/>
    <property type="chains" value="A/B=1-337"/>
</dbReference>
<dbReference type="PDB" id="2C13">
    <property type="method" value="X-ray"/>
    <property type="resolution" value="2.15 A"/>
    <property type="chains" value="A/B=1-337"/>
</dbReference>
<dbReference type="PDB" id="2C14">
    <property type="method" value="X-ray"/>
    <property type="resolution" value="1.90 A"/>
    <property type="chains" value="A/B=1-337"/>
</dbReference>
<dbReference type="PDB" id="2C15">
    <property type="method" value="X-ray"/>
    <property type="resolution" value="1.48 A"/>
    <property type="chains" value="A/B=1-337"/>
</dbReference>
<dbReference type="PDB" id="2C16">
    <property type="method" value="X-ray"/>
    <property type="resolution" value="2.02 A"/>
    <property type="chains" value="A/B=1-337"/>
</dbReference>
<dbReference type="PDB" id="2C18">
    <property type="method" value="X-ray"/>
    <property type="resolution" value="1.93 A"/>
    <property type="chains" value="A/B=1-337"/>
</dbReference>
<dbReference type="PDB" id="2C19">
    <property type="method" value="X-ray"/>
    <property type="resolution" value="2.05 A"/>
    <property type="chains" value="A/B=1-337"/>
</dbReference>
<dbReference type="PDB" id="2WOQ">
    <property type="method" value="X-ray"/>
    <property type="resolution" value="1.75 A"/>
    <property type="chains" value="A=1-337"/>
</dbReference>
<dbReference type="PDBsum" id="1B4K"/>
<dbReference type="PDBsum" id="1GZG"/>
<dbReference type="PDBsum" id="1W54"/>
<dbReference type="PDBsum" id="1W56"/>
<dbReference type="PDBsum" id="1W5M"/>
<dbReference type="PDBsum" id="1W5N"/>
<dbReference type="PDBsum" id="1W5O"/>
<dbReference type="PDBsum" id="1W5P"/>
<dbReference type="PDBsum" id="1W5Q"/>
<dbReference type="PDBsum" id="2C13"/>
<dbReference type="PDBsum" id="2C14"/>
<dbReference type="PDBsum" id="2C15"/>
<dbReference type="PDBsum" id="2C16"/>
<dbReference type="PDBsum" id="2C18"/>
<dbReference type="PDBsum" id="2C19"/>
<dbReference type="PDBsum" id="2WOQ"/>
<dbReference type="SMR" id="Q59643"/>
<dbReference type="FunCoup" id="Q59643">
    <property type="interactions" value="711"/>
</dbReference>
<dbReference type="STRING" id="208964.PA5243"/>
<dbReference type="BindingDB" id="Q59643"/>
<dbReference type="ChEMBL" id="CHEMBL3286086"/>
<dbReference type="DrugBank" id="DB02828">
    <property type="generic name" value="5-Fluorolevulinic Acid"/>
</dbReference>
<dbReference type="DrugBank" id="DB01942">
    <property type="generic name" value="Formic acid"/>
</dbReference>
<dbReference type="PaxDb" id="208964-PA5243"/>
<dbReference type="DNASU" id="879701"/>
<dbReference type="GeneID" id="879701"/>
<dbReference type="KEGG" id="pae:PA5243"/>
<dbReference type="PATRIC" id="fig|208964.12.peg.5495"/>
<dbReference type="PseudoCAP" id="PA5243"/>
<dbReference type="HOGENOM" id="CLU_035731_0_0_6"/>
<dbReference type="InParanoid" id="Q59643"/>
<dbReference type="OrthoDB" id="9805001at2"/>
<dbReference type="PhylomeDB" id="Q59643"/>
<dbReference type="BioCyc" id="PAER208964:G1FZ6-5363-MONOMER"/>
<dbReference type="BRENDA" id="4.2.1.24">
    <property type="organism ID" value="5087"/>
</dbReference>
<dbReference type="UniPathway" id="UPA00251">
    <property type="reaction ID" value="UER00318"/>
</dbReference>
<dbReference type="EvolutionaryTrace" id="Q59643"/>
<dbReference type="PRO" id="PR:Q59643"/>
<dbReference type="Proteomes" id="UP000002438">
    <property type="component" value="Chromosome"/>
</dbReference>
<dbReference type="GO" id="GO:0005829">
    <property type="term" value="C:cytosol"/>
    <property type="evidence" value="ECO:0000318"/>
    <property type="project" value="GO_Central"/>
</dbReference>
<dbReference type="GO" id="GO:0004655">
    <property type="term" value="F:porphobilinogen synthase activity"/>
    <property type="evidence" value="ECO:0000315"/>
    <property type="project" value="PseudoCAP"/>
</dbReference>
<dbReference type="GO" id="GO:0008270">
    <property type="term" value="F:zinc ion binding"/>
    <property type="evidence" value="ECO:0000318"/>
    <property type="project" value="GO_Central"/>
</dbReference>
<dbReference type="GO" id="GO:0006783">
    <property type="term" value="P:heme biosynthetic process"/>
    <property type="evidence" value="ECO:0000318"/>
    <property type="project" value="GO_Central"/>
</dbReference>
<dbReference type="GO" id="GO:0006779">
    <property type="term" value="P:porphyrin-containing compound biosynthetic process"/>
    <property type="evidence" value="ECO:0000315"/>
    <property type="project" value="PseudoCAP"/>
</dbReference>
<dbReference type="GO" id="GO:0006782">
    <property type="term" value="P:protoporphyrinogen IX biosynthetic process"/>
    <property type="evidence" value="ECO:0007669"/>
    <property type="project" value="UniProtKB-UniPathway"/>
</dbReference>
<dbReference type="CDD" id="cd04823">
    <property type="entry name" value="ALAD_PBGS_aspartate_rich"/>
    <property type="match status" value="1"/>
</dbReference>
<dbReference type="FunFam" id="3.20.20.70:FF:000019">
    <property type="entry name" value="Delta-aminolevulinic acid dehydratase"/>
    <property type="match status" value="1"/>
</dbReference>
<dbReference type="Gene3D" id="3.20.20.70">
    <property type="entry name" value="Aldolase class I"/>
    <property type="match status" value="1"/>
</dbReference>
<dbReference type="InterPro" id="IPR001731">
    <property type="entry name" value="ALAD"/>
</dbReference>
<dbReference type="InterPro" id="IPR030656">
    <property type="entry name" value="ALAD_AS"/>
</dbReference>
<dbReference type="InterPro" id="IPR013785">
    <property type="entry name" value="Aldolase_TIM"/>
</dbReference>
<dbReference type="NCBIfam" id="NF006762">
    <property type="entry name" value="PRK09283.1"/>
    <property type="match status" value="1"/>
</dbReference>
<dbReference type="PANTHER" id="PTHR11458">
    <property type="entry name" value="DELTA-AMINOLEVULINIC ACID DEHYDRATASE"/>
    <property type="match status" value="1"/>
</dbReference>
<dbReference type="PANTHER" id="PTHR11458:SF0">
    <property type="entry name" value="DELTA-AMINOLEVULINIC ACID DEHYDRATASE"/>
    <property type="match status" value="1"/>
</dbReference>
<dbReference type="Pfam" id="PF00490">
    <property type="entry name" value="ALAD"/>
    <property type="match status" value="1"/>
</dbReference>
<dbReference type="PIRSF" id="PIRSF001415">
    <property type="entry name" value="Porphbilin_synth"/>
    <property type="match status" value="1"/>
</dbReference>
<dbReference type="PRINTS" id="PR00144">
    <property type="entry name" value="DALDHYDRTASE"/>
</dbReference>
<dbReference type="SMART" id="SM01004">
    <property type="entry name" value="ALAD"/>
    <property type="match status" value="1"/>
</dbReference>
<dbReference type="SUPFAM" id="SSF51569">
    <property type="entry name" value="Aldolase"/>
    <property type="match status" value="1"/>
</dbReference>
<dbReference type="PROSITE" id="PS00169">
    <property type="entry name" value="D_ALA_DEHYDRATASE"/>
    <property type="match status" value="1"/>
</dbReference>
<reference key="1">
    <citation type="journal article" date="1998" name="Mol. Gen. Genet.">
        <title>Cloning, mapping and functional characterization of the hemB gene of Pseudomonas aeruginosa, which encodes a magnesium-dependent 5-aminolevulinic acid dehydratase.</title>
        <authorList>
            <person name="Frankenberg N."/>
            <person name="Kittel T."/>
            <person name="Hungerer C."/>
            <person name="Roemling U."/>
            <person name="Jahn D."/>
        </authorList>
    </citation>
    <scope>NUCLEOTIDE SEQUENCE [GENOMIC DNA]</scope>
    <source>
        <strain>ATCC 15692 / DSM 22644 / CIP 104116 / JCM 14847 / LMG 12228 / 1C / PRS 101 / PAO1</strain>
    </source>
</reference>
<reference key="2">
    <citation type="journal article" date="2000" name="Nature">
        <title>Complete genome sequence of Pseudomonas aeruginosa PAO1, an opportunistic pathogen.</title>
        <authorList>
            <person name="Stover C.K."/>
            <person name="Pham X.-Q.T."/>
            <person name="Erwin A.L."/>
            <person name="Mizoguchi S.D."/>
            <person name="Warrener P."/>
            <person name="Hickey M.J."/>
            <person name="Brinkman F.S.L."/>
            <person name="Hufnagle W.O."/>
            <person name="Kowalik D.J."/>
            <person name="Lagrou M."/>
            <person name="Garber R.L."/>
            <person name="Goltry L."/>
            <person name="Tolentino E."/>
            <person name="Westbrock-Wadman S."/>
            <person name="Yuan Y."/>
            <person name="Brody L.L."/>
            <person name="Coulter S.N."/>
            <person name="Folger K.R."/>
            <person name="Kas A."/>
            <person name="Larbig K."/>
            <person name="Lim R.M."/>
            <person name="Smith K.A."/>
            <person name="Spencer D.H."/>
            <person name="Wong G.K.-S."/>
            <person name="Wu Z."/>
            <person name="Paulsen I.T."/>
            <person name="Reizer J."/>
            <person name="Saier M.H. Jr."/>
            <person name="Hancock R.E.W."/>
            <person name="Lory S."/>
            <person name="Olson M.V."/>
        </authorList>
    </citation>
    <scope>NUCLEOTIDE SEQUENCE [LARGE SCALE GENOMIC DNA]</scope>
    <source>
        <strain>ATCC 15692 / DSM 22644 / CIP 104116 / JCM 14847 / LMG 12228 / 1C / PRS 101 / PAO1</strain>
    </source>
</reference>
<reference key="3">
    <citation type="journal article" date="1999" name="J. Mol. Biol.">
        <title>High resolution crystal structure of a Mg(2+)-dependent porphobilinogen synthase.</title>
        <authorList>
            <person name="Frankenberg N."/>
            <person name="Erskine P.T."/>
            <person name="Cooper J.B."/>
            <person name="Shoolingin-Jordan P.M."/>
            <person name="Jahn D."/>
            <person name="Heinz D.W."/>
        </authorList>
    </citation>
    <scope>X-RAY CRYSTALLOGRAPHY (1.67 ANGSTROMS) IN COMPLEX WITH LEVULINIC ACID AND MAGNESIUM</scope>
    <scope>SUBUNIT</scope>
</reference>
<reference key="4">
    <citation type="journal article" date="2002" name="J. Mol. Biol.">
        <title>Structure of porphobilinogen synthase from Pseudomonas aeruginosa in complex with 5-fluorolevulinic acid suggests a double Schiff base mechanism.</title>
        <authorList>
            <person name="Frere F."/>
            <person name="Schubert W.-D."/>
            <person name="Stauffer F."/>
            <person name="Frankenberg N."/>
            <person name="Neier R."/>
            <person name="Jahn D."/>
            <person name="Heinz D.W."/>
        </authorList>
    </citation>
    <scope>X-RAY CRYSTALLOGRAPHY (1.66 ANGSTROMS) OF MUTANT ASN-139 IN COMPLEX WITH 5-FLUOROLEVULINIC ACID AND MAGNESIUM</scope>
    <scope>COFACTOR</scope>
    <scope>ACTIVE SITE</scope>
</reference>
<reference key="5">
    <citation type="journal article" date="2006" name="Biochemistry">
        <title>Probing the active site of Pseudomonas aeruginosa porphobilinogen synthase using newly developed inhibitors.</title>
        <authorList>
            <person name="Frere F."/>
            <person name="Nentwich M."/>
            <person name="Gacond S."/>
            <person name="Heinz D.W."/>
            <person name="Neier R."/>
            <person name="Frankenberg-Dinkel N."/>
        </authorList>
    </citation>
    <scope>X-RAY CRYSTALLOGRAPHY (1.48 ANGSTROMS) IN COMPLEXES WITH MAGNESIUM; 5-HYDROXYLEVULINIC ACID AND OTHER INHIBITORS</scope>
    <scope>CATALYTIC ACTIVITY</scope>
    <scope>COFACTOR</scope>
    <scope>ACTIVE SITE</scope>
</reference>
<reference key="6">
    <citation type="journal article" date="2010" name="Antimicrob. Agents Chemother.">
        <title>Structure of the heme biosynthetic Pseudomonas aeruginosa porphobilinogen synthase in complex with the antibiotic alaremycin.</title>
        <authorList>
            <person name="Heinemann I.U."/>
            <person name="Schulz C."/>
            <person name="Schubert W.D."/>
            <person name="Heinz D.W."/>
            <person name="Wang Y.G."/>
            <person name="Kobayashi Y."/>
            <person name="Awa Y."/>
            <person name="Wachi M."/>
            <person name="Jahn D."/>
            <person name="Jahn M."/>
        </authorList>
    </citation>
    <scope>X-RAY CRYSTALLOGRAPHY (1.75 ANGSTROMS) IN COMPLEX WITH ALAREMYCIN</scope>
</reference>
<feature type="chain" id="PRO_0000140507" description="Delta-aminolevulinic acid dehydratase">
    <location>
        <begin position="1"/>
        <end position="337"/>
    </location>
</feature>
<feature type="active site" description="Schiff-base intermediate with substrate" evidence="3 4">
    <location>
        <position position="205"/>
    </location>
</feature>
<feature type="active site" description="Schiff-base intermediate with substrate" evidence="3 4">
    <location>
        <position position="260"/>
    </location>
</feature>
<feature type="binding site" evidence="2 3">
    <location>
        <position position="215"/>
    </location>
    <ligand>
        <name>5-aminolevulinate</name>
        <dbReference type="ChEBI" id="CHEBI:356416"/>
        <label>1</label>
    </ligand>
</feature>
<feature type="binding site" evidence="2 3">
    <location>
        <position position="229"/>
    </location>
    <ligand>
        <name>5-aminolevulinate</name>
        <dbReference type="ChEBI" id="CHEBI:356416"/>
        <label>1</label>
    </ligand>
</feature>
<feature type="binding site" evidence="2 3">
    <location>
        <position position="245"/>
    </location>
    <ligand>
        <name>Mg(2+)</name>
        <dbReference type="ChEBI" id="CHEBI:18420"/>
    </ligand>
</feature>
<feature type="binding site" evidence="2 3">
    <location>
        <position position="286"/>
    </location>
    <ligand>
        <name>5-aminolevulinate</name>
        <dbReference type="ChEBI" id="CHEBI:356416"/>
        <label>2</label>
    </ligand>
</feature>
<feature type="binding site" evidence="2 3">
    <location>
        <position position="324"/>
    </location>
    <ligand>
        <name>5-aminolevulinate</name>
        <dbReference type="ChEBI" id="CHEBI:356416"/>
        <label>2</label>
    </ligand>
</feature>
<feature type="turn" evidence="9">
    <location>
        <begin position="10"/>
        <end position="12"/>
    </location>
</feature>
<feature type="turn" evidence="9">
    <location>
        <begin position="15"/>
        <end position="19"/>
    </location>
</feature>
<feature type="helix" evidence="9">
    <location>
        <begin position="22"/>
        <end position="28"/>
    </location>
</feature>
<feature type="helix" evidence="9">
    <location>
        <begin position="35"/>
        <end position="37"/>
    </location>
</feature>
<feature type="strand" evidence="9">
    <location>
        <begin position="38"/>
        <end position="49"/>
    </location>
</feature>
<feature type="strand" evidence="9">
    <location>
        <begin position="51"/>
        <end position="53"/>
    </location>
</feature>
<feature type="strand" evidence="9">
    <location>
        <begin position="61"/>
        <end position="64"/>
    </location>
</feature>
<feature type="helix" evidence="9">
    <location>
        <begin position="65"/>
        <end position="77"/>
    </location>
</feature>
<feature type="strand" evidence="9">
    <location>
        <begin position="82"/>
        <end position="87"/>
    </location>
</feature>
<feature type="helix" evidence="9">
    <location>
        <begin position="91"/>
        <end position="93"/>
    </location>
</feature>
<feature type="strand" evidence="9">
    <location>
        <begin position="95"/>
        <end position="97"/>
    </location>
</feature>
<feature type="helix" evidence="9">
    <location>
        <begin position="99"/>
        <end position="102"/>
    </location>
</feature>
<feature type="helix" evidence="9">
    <location>
        <begin position="107"/>
        <end position="118"/>
    </location>
</feature>
<feature type="strand" evidence="9">
    <location>
        <begin position="122"/>
        <end position="128"/>
    </location>
</feature>
<feature type="turn" evidence="9">
    <location>
        <begin position="131"/>
        <end position="133"/>
    </location>
</feature>
<feature type="strand" evidence="8">
    <location>
        <begin position="134"/>
        <end position="136"/>
    </location>
</feature>
<feature type="helix" evidence="9">
    <location>
        <begin position="150"/>
        <end position="166"/>
    </location>
</feature>
<feature type="strand" evidence="9">
    <location>
        <begin position="170"/>
        <end position="174"/>
    </location>
</feature>
<feature type="helix" evidence="9">
    <location>
        <begin position="181"/>
        <end position="191"/>
    </location>
</feature>
<feature type="strand" evidence="9">
    <location>
        <begin position="198"/>
        <end position="206"/>
    </location>
</feature>
<feature type="helix" evidence="9">
    <location>
        <begin position="209"/>
        <end position="211"/>
    </location>
</feature>
<feature type="helix" evidence="9">
    <location>
        <begin position="212"/>
        <end position="216"/>
    </location>
</feature>
<feature type="helix" evidence="10">
    <location>
        <begin position="221"/>
        <end position="224"/>
    </location>
</feature>
<feature type="helix" evidence="9">
    <location>
        <begin position="229"/>
        <end position="231"/>
    </location>
</feature>
<feature type="strand" evidence="7">
    <location>
        <begin position="232"/>
        <end position="234"/>
    </location>
</feature>
<feature type="helix" evidence="9">
    <location>
        <begin position="240"/>
        <end position="251"/>
    </location>
</feature>
<feature type="strand" evidence="9">
    <location>
        <begin position="255"/>
        <end position="261"/>
    </location>
</feature>
<feature type="helix" evidence="9">
    <location>
        <begin position="263"/>
        <end position="265"/>
    </location>
</feature>
<feature type="helix" evidence="9">
    <location>
        <begin position="266"/>
        <end position="276"/>
    </location>
</feature>
<feature type="strand" evidence="9">
    <location>
        <begin position="280"/>
        <end position="284"/>
    </location>
</feature>
<feature type="helix" evidence="9">
    <location>
        <begin position="286"/>
        <end position="297"/>
    </location>
</feature>
<feature type="helix" evidence="9">
    <location>
        <begin position="305"/>
        <end position="316"/>
    </location>
</feature>
<feature type="strand" evidence="9">
    <location>
        <begin position="319"/>
        <end position="323"/>
    </location>
</feature>
<feature type="helix" evidence="9">
    <location>
        <begin position="326"/>
        <end position="334"/>
    </location>
</feature>
<keyword id="KW-0002">3D-structure</keyword>
<keyword id="KW-0350">Heme biosynthesis</keyword>
<keyword id="KW-0456">Lyase</keyword>
<keyword id="KW-0460">Magnesium</keyword>
<keyword id="KW-0479">Metal-binding</keyword>
<keyword id="KW-0627">Porphyrin biosynthesis</keyword>
<keyword id="KW-1185">Reference proteome</keyword>
<evidence type="ECO:0000250" key="1"/>
<evidence type="ECO:0000269" key="2">
    <source>
    </source>
</evidence>
<evidence type="ECO:0000269" key="3">
    <source>
    </source>
</evidence>
<evidence type="ECO:0000269" key="4">
    <source>
    </source>
</evidence>
<evidence type="ECO:0000269" key="5">
    <source>
    </source>
</evidence>
<evidence type="ECO:0000305" key="6"/>
<evidence type="ECO:0007829" key="7">
    <source>
        <dbReference type="PDB" id="1W54"/>
    </source>
</evidence>
<evidence type="ECO:0007829" key="8">
    <source>
        <dbReference type="PDB" id="1W5P"/>
    </source>
</evidence>
<evidence type="ECO:0007829" key="9">
    <source>
        <dbReference type="PDB" id="1W5Q"/>
    </source>
</evidence>
<evidence type="ECO:0007829" key="10">
    <source>
        <dbReference type="PDB" id="2C15"/>
    </source>
</evidence>
<protein>
    <recommendedName>
        <fullName>Delta-aminolevulinic acid dehydratase</fullName>
        <shortName>ALAD</shortName>
        <shortName>ALADH</shortName>
        <ecNumber>4.2.1.24</ecNumber>
    </recommendedName>
    <alternativeName>
        <fullName>Porphobilinogen synthase</fullName>
    </alternativeName>
</protein>
<name>HEM2_PSEAE</name>
<accession>Q59643</accession>
<gene>
    <name type="primary">hemB</name>
    <name type="ordered locus">PA5243</name>
</gene>
<proteinExistence type="evidence at protein level"/>